<feature type="chain" id="PRO_1000072507" description="Small ribosomal subunit protein uS19">
    <location>
        <begin position="1"/>
        <end position="94"/>
    </location>
</feature>
<gene>
    <name evidence="1" type="primary">rpsS</name>
    <name type="ordered locus">Dred_0219</name>
</gene>
<proteinExistence type="inferred from homology"/>
<dbReference type="EMBL" id="CP000612">
    <property type="protein sequence ID" value="ABO48768.1"/>
    <property type="molecule type" value="Genomic_DNA"/>
</dbReference>
<dbReference type="RefSeq" id="WP_011876608.1">
    <property type="nucleotide sequence ID" value="NC_009253.1"/>
</dbReference>
<dbReference type="SMR" id="A4J115"/>
<dbReference type="STRING" id="349161.Dred_0219"/>
<dbReference type="KEGG" id="drm:Dred_0219"/>
<dbReference type="eggNOG" id="COG0185">
    <property type="taxonomic scope" value="Bacteria"/>
</dbReference>
<dbReference type="HOGENOM" id="CLU_144911_0_1_9"/>
<dbReference type="OrthoDB" id="9797833at2"/>
<dbReference type="Proteomes" id="UP000001556">
    <property type="component" value="Chromosome"/>
</dbReference>
<dbReference type="GO" id="GO:0005737">
    <property type="term" value="C:cytoplasm"/>
    <property type="evidence" value="ECO:0007669"/>
    <property type="project" value="UniProtKB-ARBA"/>
</dbReference>
<dbReference type="GO" id="GO:0015935">
    <property type="term" value="C:small ribosomal subunit"/>
    <property type="evidence" value="ECO:0007669"/>
    <property type="project" value="InterPro"/>
</dbReference>
<dbReference type="GO" id="GO:0019843">
    <property type="term" value="F:rRNA binding"/>
    <property type="evidence" value="ECO:0007669"/>
    <property type="project" value="UniProtKB-UniRule"/>
</dbReference>
<dbReference type="GO" id="GO:0003735">
    <property type="term" value="F:structural constituent of ribosome"/>
    <property type="evidence" value="ECO:0007669"/>
    <property type="project" value="InterPro"/>
</dbReference>
<dbReference type="GO" id="GO:0000028">
    <property type="term" value="P:ribosomal small subunit assembly"/>
    <property type="evidence" value="ECO:0007669"/>
    <property type="project" value="TreeGrafter"/>
</dbReference>
<dbReference type="GO" id="GO:0006412">
    <property type="term" value="P:translation"/>
    <property type="evidence" value="ECO:0007669"/>
    <property type="project" value="UniProtKB-UniRule"/>
</dbReference>
<dbReference type="FunFam" id="3.30.860.10:FF:000001">
    <property type="entry name" value="30S ribosomal protein S19"/>
    <property type="match status" value="1"/>
</dbReference>
<dbReference type="Gene3D" id="3.30.860.10">
    <property type="entry name" value="30s Ribosomal Protein S19, Chain A"/>
    <property type="match status" value="1"/>
</dbReference>
<dbReference type="HAMAP" id="MF_00531">
    <property type="entry name" value="Ribosomal_uS19"/>
    <property type="match status" value="1"/>
</dbReference>
<dbReference type="InterPro" id="IPR002222">
    <property type="entry name" value="Ribosomal_uS19"/>
</dbReference>
<dbReference type="InterPro" id="IPR005732">
    <property type="entry name" value="Ribosomal_uS19_bac-type"/>
</dbReference>
<dbReference type="InterPro" id="IPR020934">
    <property type="entry name" value="Ribosomal_uS19_CS"/>
</dbReference>
<dbReference type="InterPro" id="IPR023575">
    <property type="entry name" value="Ribosomal_uS19_SF"/>
</dbReference>
<dbReference type="NCBIfam" id="TIGR01050">
    <property type="entry name" value="rpsS_bact"/>
    <property type="match status" value="1"/>
</dbReference>
<dbReference type="PANTHER" id="PTHR11880">
    <property type="entry name" value="RIBOSOMAL PROTEIN S19P FAMILY MEMBER"/>
    <property type="match status" value="1"/>
</dbReference>
<dbReference type="PANTHER" id="PTHR11880:SF8">
    <property type="entry name" value="SMALL RIBOSOMAL SUBUNIT PROTEIN US19M"/>
    <property type="match status" value="1"/>
</dbReference>
<dbReference type="Pfam" id="PF00203">
    <property type="entry name" value="Ribosomal_S19"/>
    <property type="match status" value="1"/>
</dbReference>
<dbReference type="PIRSF" id="PIRSF002144">
    <property type="entry name" value="Ribosomal_S19"/>
    <property type="match status" value="1"/>
</dbReference>
<dbReference type="PRINTS" id="PR00975">
    <property type="entry name" value="RIBOSOMALS19"/>
</dbReference>
<dbReference type="SUPFAM" id="SSF54570">
    <property type="entry name" value="Ribosomal protein S19"/>
    <property type="match status" value="1"/>
</dbReference>
<dbReference type="PROSITE" id="PS00323">
    <property type="entry name" value="RIBOSOMAL_S19"/>
    <property type="match status" value="1"/>
</dbReference>
<protein>
    <recommendedName>
        <fullName evidence="1">Small ribosomal subunit protein uS19</fullName>
    </recommendedName>
    <alternativeName>
        <fullName evidence="2">30S ribosomal protein S19</fullName>
    </alternativeName>
</protein>
<keyword id="KW-1185">Reference proteome</keyword>
<keyword id="KW-0687">Ribonucleoprotein</keyword>
<keyword id="KW-0689">Ribosomal protein</keyword>
<keyword id="KW-0694">RNA-binding</keyword>
<keyword id="KW-0699">rRNA-binding</keyword>
<comment type="function">
    <text evidence="1">Protein S19 forms a complex with S13 that binds strongly to the 16S ribosomal RNA.</text>
</comment>
<comment type="similarity">
    <text evidence="1">Belongs to the universal ribosomal protein uS19 family.</text>
</comment>
<reference key="1">
    <citation type="submission" date="2007-03" db="EMBL/GenBank/DDBJ databases">
        <title>Complete sequence of Desulfotomaculum reducens MI-1.</title>
        <authorList>
            <consortium name="US DOE Joint Genome Institute"/>
            <person name="Copeland A."/>
            <person name="Lucas S."/>
            <person name="Lapidus A."/>
            <person name="Barry K."/>
            <person name="Detter J.C."/>
            <person name="Glavina del Rio T."/>
            <person name="Hammon N."/>
            <person name="Israni S."/>
            <person name="Dalin E."/>
            <person name="Tice H."/>
            <person name="Pitluck S."/>
            <person name="Sims D."/>
            <person name="Brettin T."/>
            <person name="Bruce D."/>
            <person name="Han C."/>
            <person name="Tapia R."/>
            <person name="Schmutz J."/>
            <person name="Larimer F."/>
            <person name="Land M."/>
            <person name="Hauser L."/>
            <person name="Kyrpides N."/>
            <person name="Kim E."/>
            <person name="Tebo B.M."/>
            <person name="Richardson P."/>
        </authorList>
    </citation>
    <scope>NUCLEOTIDE SEQUENCE [LARGE SCALE GENOMIC DNA]</scope>
    <source>
        <strain>ATCC BAA-1160 / DSM 100696 / MI-1</strain>
    </source>
</reference>
<sequence>MARSLKKGPFIDDHLLKKVDEMNEKGEKKVFKTWSRRSTIFPQMIGHTIAVYDGRKHIPVYITEDMVGHKLGEFAPTRTYRGHADKSERSTGLK</sequence>
<accession>A4J115</accession>
<organism>
    <name type="scientific">Desulforamulus reducens (strain ATCC BAA-1160 / DSM 100696 / MI-1)</name>
    <name type="common">Desulfotomaculum reducens</name>
    <dbReference type="NCBI Taxonomy" id="349161"/>
    <lineage>
        <taxon>Bacteria</taxon>
        <taxon>Bacillati</taxon>
        <taxon>Bacillota</taxon>
        <taxon>Clostridia</taxon>
        <taxon>Eubacteriales</taxon>
        <taxon>Peptococcaceae</taxon>
        <taxon>Desulforamulus</taxon>
    </lineage>
</organism>
<evidence type="ECO:0000255" key="1">
    <source>
        <dbReference type="HAMAP-Rule" id="MF_00531"/>
    </source>
</evidence>
<evidence type="ECO:0000305" key="2"/>
<name>RS19_DESRM</name>